<proteinExistence type="inferred from homology"/>
<keyword id="KW-0030">Aminoacyl-tRNA synthetase</keyword>
<keyword id="KW-0067">ATP-binding</keyword>
<keyword id="KW-0963">Cytoplasm</keyword>
<keyword id="KW-0436">Ligase</keyword>
<keyword id="KW-0547">Nucleotide-binding</keyword>
<keyword id="KW-0648">Protein biosynthesis</keyword>
<dbReference type="EC" id="6.1.1.14" evidence="1"/>
<dbReference type="EMBL" id="CP000260">
    <property type="protein sequence ID" value="ABF34569.1"/>
    <property type="molecule type" value="Genomic_DNA"/>
</dbReference>
<dbReference type="RefSeq" id="WP_010922565.1">
    <property type="nucleotide sequence ID" value="NZ_CVUH01000010.1"/>
</dbReference>
<dbReference type="SMR" id="Q1JFJ0"/>
<dbReference type="KEGG" id="sph:MGAS10270_Spy1504"/>
<dbReference type="HOGENOM" id="CLU_057066_1_0_9"/>
<dbReference type="Proteomes" id="UP000002436">
    <property type="component" value="Chromosome"/>
</dbReference>
<dbReference type="GO" id="GO:0005829">
    <property type="term" value="C:cytosol"/>
    <property type="evidence" value="ECO:0007669"/>
    <property type="project" value="TreeGrafter"/>
</dbReference>
<dbReference type="GO" id="GO:0005524">
    <property type="term" value="F:ATP binding"/>
    <property type="evidence" value="ECO:0007669"/>
    <property type="project" value="UniProtKB-UniRule"/>
</dbReference>
<dbReference type="GO" id="GO:0140096">
    <property type="term" value="F:catalytic activity, acting on a protein"/>
    <property type="evidence" value="ECO:0007669"/>
    <property type="project" value="UniProtKB-ARBA"/>
</dbReference>
<dbReference type="GO" id="GO:0004820">
    <property type="term" value="F:glycine-tRNA ligase activity"/>
    <property type="evidence" value="ECO:0007669"/>
    <property type="project" value="UniProtKB-UniRule"/>
</dbReference>
<dbReference type="GO" id="GO:0016740">
    <property type="term" value="F:transferase activity"/>
    <property type="evidence" value="ECO:0007669"/>
    <property type="project" value="UniProtKB-ARBA"/>
</dbReference>
<dbReference type="GO" id="GO:0006426">
    <property type="term" value="P:glycyl-tRNA aminoacylation"/>
    <property type="evidence" value="ECO:0007669"/>
    <property type="project" value="UniProtKB-UniRule"/>
</dbReference>
<dbReference type="CDD" id="cd00733">
    <property type="entry name" value="GlyRS_alpha_core"/>
    <property type="match status" value="1"/>
</dbReference>
<dbReference type="FunFam" id="3.30.930.10:FF:000006">
    <property type="entry name" value="Glycine--tRNA ligase alpha subunit"/>
    <property type="match status" value="1"/>
</dbReference>
<dbReference type="Gene3D" id="3.30.930.10">
    <property type="entry name" value="Bira Bifunctional Protein, Domain 2"/>
    <property type="match status" value="1"/>
</dbReference>
<dbReference type="Gene3D" id="1.20.58.180">
    <property type="entry name" value="Class II aaRS and biotin synthetases, domain 2"/>
    <property type="match status" value="1"/>
</dbReference>
<dbReference type="HAMAP" id="MF_00254">
    <property type="entry name" value="Gly_tRNA_synth_alpha"/>
    <property type="match status" value="1"/>
</dbReference>
<dbReference type="InterPro" id="IPR045864">
    <property type="entry name" value="aa-tRNA-synth_II/BPL/LPL"/>
</dbReference>
<dbReference type="InterPro" id="IPR006194">
    <property type="entry name" value="Gly-tRNA-synth_heterodimer"/>
</dbReference>
<dbReference type="InterPro" id="IPR002310">
    <property type="entry name" value="Gly-tRNA_ligase_asu"/>
</dbReference>
<dbReference type="NCBIfam" id="TIGR00388">
    <property type="entry name" value="glyQ"/>
    <property type="match status" value="1"/>
</dbReference>
<dbReference type="NCBIfam" id="NF006827">
    <property type="entry name" value="PRK09348.1"/>
    <property type="match status" value="1"/>
</dbReference>
<dbReference type="PANTHER" id="PTHR30075:SF2">
    <property type="entry name" value="GLYCINE--TRNA LIGASE, CHLOROPLASTIC_MITOCHONDRIAL 2"/>
    <property type="match status" value="1"/>
</dbReference>
<dbReference type="PANTHER" id="PTHR30075">
    <property type="entry name" value="GLYCYL-TRNA SYNTHETASE"/>
    <property type="match status" value="1"/>
</dbReference>
<dbReference type="Pfam" id="PF02091">
    <property type="entry name" value="tRNA-synt_2e"/>
    <property type="match status" value="1"/>
</dbReference>
<dbReference type="PRINTS" id="PR01044">
    <property type="entry name" value="TRNASYNTHGA"/>
</dbReference>
<dbReference type="SUPFAM" id="SSF55681">
    <property type="entry name" value="Class II aaRS and biotin synthetases"/>
    <property type="match status" value="1"/>
</dbReference>
<dbReference type="PROSITE" id="PS50861">
    <property type="entry name" value="AA_TRNA_LIGASE_II_GLYAB"/>
    <property type="match status" value="1"/>
</dbReference>
<protein>
    <recommendedName>
        <fullName evidence="1">Glycine--tRNA ligase alpha subunit</fullName>
        <ecNumber evidence="1">6.1.1.14</ecNumber>
    </recommendedName>
    <alternativeName>
        <fullName evidence="1">Glycyl-tRNA synthetase alpha subunit</fullName>
        <shortName evidence="1">GlyRS</shortName>
    </alternativeName>
</protein>
<organism>
    <name type="scientific">Streptococcus pyogenes serotype M2 (strain MGAS10270)</name>
    <dbReference type="NCBI Taxonomy" id="370552"/>
    <lineage>
        <taxon>Bacteria</taxon>
        <taxon>Bacillati</taxon>
        <taxon>Bacillota</taxon>
        <taxon>Bacilli</taxon>
        <taxon>Lactobacillales</taxon>
        <taxon>Streptococcaceae</taxon>
        <taxon>Streptococcus</taxon>
    </lineage>
</organism>
<evidence type="ECO:0000255" key="1">
    <source>
        <dbReference type="HAMAP-Rule" id="MF_00254"/>
    </source>
</evidence>
<accession>Q1JFJ0</accession>
<gene>
    <name evidence="1" type="primary">glyQ</name>
    <name type="ordered locus">MGAS10270_Spy1504</name>
</gene>
<comment type="catalytic activity">
    <reaction evidence="1">
        <text>tRNA(Gly) + glycine + ATP = glycyl-tRNA(Gly) + AMP + diphosphate</text>
        <dbReference type="Rhea" id="RHEA:16013"/>
        <dbReference type="Rhea" id="RHEA-COMP:9664"/>
        <dbReference type="Rhea" id="RHEA-COMP:9683"/>
        <dbReference type="ChEBI" id="CHEBI:30616"/>
        <dbReference type="ChEBI" id="CHEBI:33019"/>
        <dbReference type="ChEBI" id="CHEBI:57305"/>
        <dbReference type="ChEBI" id="CHEBI:78442"/>
        <dbReference type="ChEBI" id="CHEBI:78522"/>
        <dbReference type="ChEBI" id="CHEBI:456215"/>
        <dbReference type="EC" id="6.1.1.14"/>
    </reaction>
</comment>
<comment type="subunit">
    <text evidence="1">Tetramer of two alpha and two beta subunits.</text>
</comment>
<comment type="subcellular location">
    <subcellularLocation>
        <location evidence="1">Cytoplasm</location>
    </subcellularLocation>
</comment>
<comment type="similarity">
    <text evidence="1">Belongs to the class-II aminoacyl-tRNA synthetase family.</text>
</comment>
<reference key="1">
    <citation type="journal article" date="2006" name="Proc. Natl. Acad. Sci. U.S.A.">
        <title>Molecular genetic anatomy of inter- and intraserotype variation in the human bacterial pathogen group A Streptococcus.</title>
        <authorList>
            <person name="Beres S.B."/>
            <person name="Richter E.W."/>
            <person name="Nagiec M.J."/>
            <person name="Sumby P."/>
            <person name="Porcella S.F."/>
            <person name="DeLeo F.R."/>
            <person name="Musser J.M."/>
        </authorList>
    </citation>
    <scope>NUCLEOTIDE SEQUENCE [LARGE SCALE GENOMIC DNA]</scope>
    <source>
        <strain>MGAS10270</strain>
    </source>
</reference>
<name>SYGA_STRPD</name>
<sequence>MSKKLTFQEIILTLQQYWNDQGCMLMQAYDNEKGAGTMSPYTFLRAIGPEPWNAAYVEPSRRPADGRYGENPNRLYQHHQFQVVMKPSPSNIQELYLASLEKLGINPLEHDIRFVEDNWENPSTGSAGLGWEVWLDGMEITQFTYFQQVGGLATSPVTAEVTYGLERLASYIQEVDSVYDIEWAPGVKYGEIFLQPEYEHSKYSFEISDQDMLLENFEKFEKEASRALEEGLVHPAYDYVLKCSHTFNLLDARGAVSVTERAGYIARIRNLARVVAKTFVAERKKLGFPLLDEATRAILLAEDDE</sequence>
<feature type="chain" id="PRO_1000047502" description="Glycine--tRNA ligase alpha subunit">
    <location>
        <begin position="1"/>
        <end position="305"/>
    </location>
</feature>